<dbReference type="EMBL" id="CP000387">
    <property type="protein sequence ID" value="ABN45178.1"/>
    <property type="molecule type" value="Genomic_DNA"/>
</dbReference>
<dbReference type="RefSeq" id="WP_002894584.1">
    <property type="nucleotide sequence ID" value="NZ_CAXTYR010000001.1"/>
</dbReference>
<dbReference type="RefSeq" id="YP_001035728.1">
    <property type="nucleotide sequence ID" value="NC_009009.1"/>
</dbReference>
<dbReference type="SMR" id="A3CPS3"/>
<dbReference type="STRING" id="388919.SSA_1796"/>
<dbReference type="GeneID" id="48426127"/>
<dbReference type="KEGG" id="ssa:SSA_1796"/>
<dbReference type="PATRIC" id="fig|388919.9.peg.1703"/>
<dbReference type="eggNOG" id="COG0782">
    <property type="taxonomic scope" value="Bacteria"/>
</dbReference>
<dbReference type="HOGENOM" id="CLU_101379_2_1_9"/>
<dbReference type="OrthoDB" id="9808774at2"/>
<dbReference type="Proteomes" id="UP000002148">
    <property type="component" value="Chromosome"/>
</dbReference>
<dbReference type="GO" id="GO:0003677">
    <property type="term" value="F:DNA binding"/>
    <property type="evidence" value="ECO:0007669"/>
    <property type="project" value="UniProtKB-UniRule"/>
</dbReference>
<dbReference type="GO" id="GO:0070063">
    <property type="term" value="F:RNA polymerase binding"/>
    <property type="evidence" value="ECO:0007669"/>
    <property type="project" value="InterPro"/>
</dbReference>
<dbReference type="GO" id="GO:0006354">
    <property type="term" value="P:DNA-templated transcription elongation"/>
    <property type="evidence" value="ECO:0007669"/>
    <property type="project" value="TreeGrafter"/>
</dbReference>
<dbReference type="GO" id="GO:0032784">
    <property type="term" value="P:regulation of DNA-templated transcription elongation"/>
    <property type="evidence" value="ECO:0007669"/>
    <property type="project" value="UniProtKB-UniRule"/>
</dbReference>
<dbReference type="FunFam" id="1.10.287.180:FF:000001">
    <property type="entry name" value="Transcription elongation factor GreA"/>
    <property type="match status" value="1"/>
</dbReference>
<dbReference type="FunFam" id="3.10.50.30:FF:000001">
    <property type="entry name" value="Transcription elongation factor GreA"/>
    <property type="match status" value="1"/>
</dbReference>
<dbReference type="Gene3D" id="3.10.50.30">
    <property type="entry name" value="Transcription elongation factor, GreA/GreB, C-terminal domain"/>
    <property type="match status" value="1"/>
</dbReference>
<dbReference type="Gene3D" id="1.10.287.180">
    <property type="entry name" value="Transcription elongation factor, GreA/GreB, N-terminal domain"/>
    <property type="match status" value="1"/>
</dbReference>
<dbReference type="HAMAP" id="MF_00105">
    <property type="entry name" value="GreA_GreB"/>
    <property type="match status" value="1"/>
</dbReference>
<dbReference type="InterPro" id="IPR036953">
    <property type="entry name" value="GreA/GreB_C_sf"/>
</dbReference>
<dbReference type="InterPro" id="IPR018151">
    <property type="entry name" value="TF_GreA/GreB_CS"/>
</dbReference>
<dbReference type="InterPro" id="IPR006359">
    <property type="entry name" value="Tscrpt_elong_fac_GreA"/>
</dbReference>
<dbReference type="InterPro" id="IPR028624">
    <property type="entry name" value="Tscrpt_elong_fac_GreA/B"/>
</dbReference>
<dbReference type="InterPro" id="IPR001437">
    <property type="entry name" value="Tscrpt_elong_fac_GreA/B_C"/>
</dbReference>
<dbReference type="InterPro" id="IPR023459">
    <property type="entry name" value="Tscrpt_elong_fac_GreA/B_fam"/>
</dbReference>
<dbReference type="InterPro" id="IPR022691">
    <property type="entry name" value="Tscrpt_elong_fac_GreA/B_N"/>
</dbReference>
<dbReference type="InterPro" id="IPR036805">
    <property type="entry name" value="Tscrpt_elong_fac_GreA/B_N_sf"/>
</dbReference>
<dbReference type="NCBIfam" id="TIGR01462">
    <property type="entry name" value="greA"/>
    <property type="match status" value="1"/>
</dbReference>
<dbReference type="NCBIfam" id="NF001260">
    <property type="entry name" value="PRK00226.1-1"/>
    <property type="match status" value="1"/>
</dbReference>
<dbReference type="NCBIfam" id="NF001263">
    <property type="entry name" value="PRK00226.1-4"/>
    <property type="match status" value="1"/>
</dbReference>
<dbReference type="PANTHER" id="PTHR30437">
    <property type="entry name" value="TRANSCRIPTION ELONGATION FACTOR GREA"/>
    <property type="match status" value="1"/>
</dbReference>
<dbReference type="PANTHER" id="PTHR30437:SF4">
    <property type="entry name" value="TRANSCRIPTION ELONGATION FACTOR GREA"/>
    <property type="match status" value="1"/>
</dbReference>
<dbReference type="Pfam" id="PF01272">
    <property type="entry name" value="GreA_GreB"/>
    <property type="match status" value="1"/>
</dbReference>
<dbReference type="Pfam" id="PF03449">
    <property type="entry name" value="GreA_GreB_N"/>
    <property type="match status" value="1"/>
</dbReference>
<dbReference type="PIRSF" id="PIRSF006092">
    <property type="entry name" value="GreA_GreB"/>
    <property type="match status" value="1"/>
</dbReference>
<dbReference type="SUPFAM" id="SSF54534">
    <property type="entry name" value="FKBP-like"/>
    <property type="match status" value="1"/>
</dbReference>
<dbReference type="SUPFAM" id="SSF46557">
    <property type="entry name" value="GreA transcript cleavage protein, N-terminal domain"/>
    <property type="match status" value="1"/>
</dbReference>
<dbReference type="PROSITE" id="PS00829">
    <property type="entry name" value="GREAB_1"/>
    <property type="match status" value="1"/>
</dbReference>
<dbReference type="PROSITE" id="PS00830">
    <property type="entry name" value="GREAB_2"/>
    <property type="match status" value="1"/>
</dbReference>
<organism>
    <name type="scientific">Streptococcus sanguinis (strain SK36)</name>
    <dbReference type="NCBI Taxonomy" id="388919"/>
    <lineage>
        <taxon>Bacteria</taxon>
        <taxon>Bacillati</taxon>
        <taxon>Bacillota</taxon>
        <taxon>Bacilli</taxon>
        <taxon>Lactobacillales</taxon>
        <taxon>Streptococcaceae</taxon>
        <taxon>Streptococcus</taxon>
    </lineage>
</organism>
<name>GREA_STRSV</name>
<accession>A3CPS3</accession>
<keyword id="KW-0175">Coiled coil</keyword>
<keyword id="KW-0238">DNA-binding</keyword>
<keyword id="KW-1185">Reference proteome</keyword>
<keyword id="KW-0804">Transcription</keyword>
<keyword id="KW-0805">Transcription regulation</keyword>
<reference key="1">
    <citation type="journal article" date="2007" name="J. Bacteriol.">
        <title>Genome of the opportunistic pathogen Streptococcus sanguinis.</title>
        <authorList>
            <person name="Xu P."/>
            <person name="Alves J.M."/>
            <person name="Kitten T."/>
            <person name="Brown A."/>
            <person name="Chen Z."/>
            <person name="Ozaki L.S."/>
            <person name="Manque P."/>
            <person name="Ge X."/>
            <person name="Serrano M.G."/>
            <person name="Puiu D."/>
            <person name="Hendricks S."/>
            <person name="Wang Y."/>
            <person name="Chaplin M.D."/>
            <person name="Akan D."/>
            <person name="Paik S."/>
            <person name="Peterson D.L."/>
            <person name="Macrina F.L."/>
            <person name="Buck G.A."/>
        </authorList>
    </citation>
    <scope>NUCLEOTIDE SEQUENCE [LARGE SCALE GENOMIC DNA]</scope>
    <source>
        <strain>SK36</strain>
    </source>
</reference>
<comment type="function">
    <text evidence="1">Necessary for efficient RNA polymerase transcription elongation past template-encoded arresting sites. The arresting sites in DNA have the property of trapping a certain fraction of elongating RNA polymerases that pass through, resulting in locked ternary complexes. Cleavage of the nascent transcript by cleavage factors such as GreA or GreB allows the resumption of elongation from the new 3'terminus. GreA releases sequences of 2 to 3 nucleotides.</text>
</comment>
<comment type="similarity">
    <text evidence="1">Belongs to the GreA/GreB family.</text>
</comment>
<evidence type="ECO:0000255" key="1">
    <source>
        <dbReference type="HAMAP-Rule" id="MF_00105"/>
    </source>
</evidence>
<protein>
    <recommendedName>
        <fullName evidence="1">Transcription elongation factor GreA</fullName>
    </recommendedName>
    <alternativeName>
        <fullName evidence="1">Transcript cleavage factor GreA</fullName>
    </alternativeName>
</protein>
<gene>
    <name evidence="1" type="primary">greA</name>
    <name type="ordered locus">SSA_1796</name>
</gene>
<feature type="chain" id="PRO_1000034311" description="Transcription elongation factor GreA">
    <location>
        <begin position="1"/>
        <end position="160"/>
    </location>
</feature>
<feature type="coiled-coil region" evidence="1">
    <location>
        <begin position="1"/>
        <end position="72"/>
    </location>
</feature>
<proteinExistence type="inferred from homology"/>
<sequence>MAEKTYPMTLEEKEKLEKELEELKLVRRPEVVERIKIARSYGDLSENSEYEAAKDEQAFVEGQISSLETKIRYAEIVNSDAVAKDEVAIGKTVTIQEVGESEEEVYIIVGSAGADAFAGKVSNESPIGQALIGKKTGDTATVETPVGSYDVKILKVEKTV</sequence>